<reference key="1">
    <citation type="journal article" date="2008" name="Genome Res.">
        <title>Comparative genome analysis of Salmonella enteritidis PT4 and Salmonella gallinarum 287/91 provides insights into evolutionary and host adaptation pathways.</title>
        <authorList>
            <person name="Thomson N.R."/>
            <person name="Clayton D.J."/>
            <person name="Windhorst D."/>
            <person name="Vernikos G."/>
            <person name="Davidson S."/>
            <person name="Churcher C."/>
            <person name="Quail M.A."/>
            <person name="Stevens M."/>
            <person name="Jones M.A."/>
            <person name="Watson M."/>
            <person name="Barron A."/>
            <person name="Layton A."/>
            <person name="Pickard D."/>
            <person name="Kingsley R.A."/>
            <person name="Bignell A."/>
            <person name="Clark L."/>
            <person name="Harris B."/>
            <person name="Ormond D."/>
            <person name="Abdellah Z."/>
            <person name="Brooks K."/>
            <person name="Cherevach I."/>
            <person name="Chillingworth T."/>
            <person name="Woodward J."/>
            <person name="Norberczak H."/>
            <person name="Lord A."/>
            <person name="Arrowsmith C."/>
            <person name="Jagels K."/>
            <person name="Moule S."/>
            <person name="Mungall K."/>
            <person name="Saunders M."/>
            <person name="Whitehead S."/>
            <person name="Chabalgoity J.A."/>
            <person name="Maskell D."/>
            <person name="Humphreys T."/>
            <person name="Roberts M."/>
            <person name="Barrow P.A."/>
            <person name="Dougan G."/>
            <person name="Parkhill J."/>
        </authorList>
    </citation>
    <scope>NUCLEOTIDE SEQUENCE [LARGE SCALE GENOMIC DNA]</scope>
    <source>
        <strain>287/91 / NCTC 13346</strain>
    </source>
</reference>
<dbReference type="EMBL" id="AM933173">
    <property type="protein sequence ID" value="CAR39773.1"/>
    <property type="molecule type" value="Genomic_DNA"/>
</dbReference>
<dbReference type="RefSeq" id="WP_001138115.1">
    <property type="nucleotide sequence ID" value="NC_011274.1"/>
</dbReference>
<dbReference type="SMR" id="B5RH19"/>
<dbReference type="GeneID" id="97603665"/>
<dbReference type="KEGG" id="seg:SG4003"/>
<dbReference type="HOGENOM" id="CLU_144911_0_1_6"/>
<dbReference type="Proteomes" id="UP000008321">
    <property type="component" value="Chromosome"/>
</dbReference>
<dbReference type="GO" id="GO:0005737">
    <property type="term" value="C:cytoplasm"/>
    <property type="evidence" value="ECO:0007669"/>
    <property type="project" value="UniProtKB-ARBA"/>
</dbReference>
<dbReference type="GO" id="GO:0015935">
    <property type="term" value="C:small ribosomal subunit"/>
    <property type="evidence" value="ECO:0007669"/>
    <property type="project" value="InterPro"/>
</dbReference>
<dbReference type="GO" id="GO:0019843">
    <property type="term" value="F:rRNA binding"/>
    <property type="evidence" value="ECO:0007669"/>
    <property type="project" value="UniProtKB-UniRule"/>
</dbReference>
<dbReference type="GO" id="GO:0003735">
    <property type="term" value="F:structural constituent of ribosome"/>
    <property type="evidence" value="ECO:0007669"/>
    <property type="project" value="InterPro"/>
</dbReference>
<dbReference type="GO" id="GO:0000028">
    <property type="term" value="P:ribosomal small subunit assembly"/>
    <property type="evidence" value="ECO:0007669"/>
    <property type="project" value="TreeGrafter"/>
</dbReference>
<dbReference type="GO" id="GO:0006412">
    <property type="term" value="P:translation"/>
    <property type="evidence" value="ECO:0007669"/>
    <property type="project" value="UniProtKB-UniRule"/>
</dbReference>
<dbReference type="FunFam" id="3.30.860.10:FF:000001">
    <property type="entry name" value="30S ribosomal protein S19"/>
    <property type="match status" value="1"/>
</dbReference>
<dbReference type="Gene3D" id="3.30.860.10">
    <property type="entry name" value="30s Ribosomal Protein S19, Chain A"/>
    <property type="match status" value="1"/>
</dbReference>
<dbReference type="HAMAP" id="MF_00531">
    <property type="entry name" value="Ribosomal_uS19"/>
    <property type="match status" value="1"/>
</dbReference>
<dbReference type="InterPro" id="IPR002222">
    <property type="entry name" value="Ribosomal_uS19"/>
</dbReference>
<dbReference type="InterPro" id="IPR005732">
    <property type="entry name" value="Ribosomal_uS19_bac-type"/>
</dbReference>
<dbReference type="InterPro" id="IPR020934">
    <property type="entry name" value="Ribosomal_uS19_CS"/>
</dbReference>
<dbReference type="InterPro" id="IPR023575">
    <property type="entry name" value="Ribosomal_uS19_SF"/>
</dbReference>
<dbReference type="NCBIfam" id="TIGR01050">
    <property type="entry name" value="rpsS_bact"/>
    <property type="match status" value="1"/>
</dbReference>
<dbReference type="PANTHER" id="PTHR11880">
    <property type="entry name" value="RIBOSOMAL PROTEIN S19P FAMILY MEMBER"/>
    <property type="match status" value="1"/>
</dbReference>
<dbReference type="PANTHER" id="PTHR11880:SF8">
    <property type="entry name" value="SMALL RIBOSOMAL SUBUNIT PROTEIN US19M"/>
    <property type="match status" value="1"/>
</dbReference>
<dbReference type="Pfam" id="PF00203">
    <property type="entry name" value="Ribosomal_S19"/>
    <property type="match status" value="1"/>
</dbReference>
<dbReference type="PIRSF" id="PIRSF002144">
    <property type="entry name" value="Ribosomal_S19"/>
    <property type="match status" value="1"/>
</dbReference>
<dbReference type="PRINTS" id="PR00975">
    <property type="entry name" value="RIBOSOMALS19"/>
</dbReference>
<dbReference type="SUPFAM" id="SSF54570">
    <property type="entry name" value="Ribosomal protein S19"/>
    <property type="match status" value="1"/>
</dbReference>
<dbReference type="PROSITE" id="PS00323">
    <property type="entry name" value="RIBOSOMAL_S19"/>
    <property type="match status" value="1"/>
</dbReference>
<name>RS19_SALG2</name>
<gene>
    <name evidence="1" type="primary">rpsS</name>
    <name type="ordered locus">SG4003</name>
</gene>
<accession>B5RH19</accession>
<feature type="chain" id="PRO_1000128031" description="Small ribosomal subunit protein uS19">
    <location>
        <begin position="1"/>
        <end position="92"/>
    </location>
</feature>
<protein>
    <recommendedName>
        <fullName evidence="1">Small ribosomal subunit protein uS19</fullName>
    </recommendedName>
    <alternativeName>
        <fullName evidence="2">30S ribosomal protein S19</fullName>
    </alternativeName>
</protein>
<evidence type="ECO:0000255" key="1">
    <source>
        <dbReference type="HAMAP-Rule" id="MF_00531"/>
    </source>
</evidence>
<evidence type="ECO:0000305" key="2"/>
<keyword id="KW-0687">Ribonucleoprotein</keyword>
<keyword id="KW-0689">Ribosomal protein</keyword>
<keyword id="KW-0694">RNA-binding</keyword>
<keyword id="KW-0699">rRNA-binding</keyword>
<organism>
    <name type="scientific">Salmonella gallinarum (strain 287/91 / NCTC 13346)</name>
    <dbReference type="NCBI Taxonomy" id="550538"/>
    <lineage>
        <taxon>Bacteria</taxon>
        <taxon>Pseudomonadati</taxon>
        <taxon>Pseudomonadota</taxon>
        <taxon>Gammaproteobacteria</taxon>
        <taxon>Enterobacterales</taxon>
        <taxon>Enterobacteriaceae</taxon>
        <taxon>Salmonella</taxon>
    </lineage>
</organism>
<sequence length="92" mass="10416">MPRSLKKGPFIDLHLLKKVEKAVESGDKKPLRTWSRRSTIFPNMIGLTIAVHNGRQHVPVFVSDEMVGHKLGEFAPTRTYRGHAADKKAKKK</sequence>
<proteinExistence type="inferred from homology"/>
<comment type="function">
    <text evidence="1">Protein S19 forms a complex with S13 that binds strongly to the 16S ribosomal RNA.</text>
</comment>
<comment type="similarity">
    <text evidence="1">Belongs to the universal ribosomal protein uS19 family.</text>
</comment>